<reference key="1">
    <citation type="submission" date="2007-08" db="EMBL/GenBank/DDBJ databases">
        <authorList>
            <consortium name="The Vibrio harveyi Genome Sequencing Project"/>
            <person name="Bassler B."/>
            <person name="Clifton S.W."/>
            <person name="Fulton L."/>
            <person name="Delehaunty K."/>
            <person name="Fronick C."/>
            <person name="Harrison M."/>
            <person name="Markivic C."/>
            <person name="Fulton R."/>
            <person name="Tin-Wollam A.-M."/>
            <person name="Shah N."/>
            <person name="Pepin K."/>
            <person name="Nash W."/>
            <person name="Thiruvilangam P."/>
            <person name="Bhonagiri V."/>
            <person name="Waters C."/>
            <person name="Tu K.C."/>
            <person name="Irgon J."/>
            <person name="Wilson R.K."/>
        </authorList>
    </citation>
    <scope>NUCLEOTIDE SEQUENCE [LARGE SCALE GENOMIC DNA]</scope>
    <source>
        <strain>ATCC BAA-1116 / BB120</strain>
    </source>
</reference>
<organism>
    <name type="scientific">Vibrio campbellii (strain ATCC BAA-1116)</name>
    <dbReference type="NCBI Taxonomy" id="2902295"/>
    <lineage>
        <taxon>Bacteria</taxon>
        <taxon>Pseudomonadati</taxon>
        <taxon>Pseudomonadota</taxon>
        <taxon>Gammaproteobacteria</taxon>
        <taxon>Vibrionales</taxon>
        <taxon>Vibrionaceae</taxon>
        <taxon>Vibrio</taxon>
    </lineage>
</organism>
<protein>
    <recommendedName>
        <fullName evidence="1">UPF0294 protein VIBHAR_03217</fullName>
    </recommendedName>
</protein>
<proteinExistence type="inferred from homology"/>
<accession>A7MY11</accession>
<feature type="chain" id="PRO_1000065258" description="UPF0294 protein VIBHAR_03217">
    <location>
        <begin position="1"/>
        <end position="282"/>
    </location>
</feature>
<dbReference type="EMBL" id="CP000789">
    <property type="protein sequence ID" value="ABU72166.1"/>
    <property type="molecule type" value="Genomic_DNA"/>
</dbReference>
<dbReference type="RefSeq" id="WP_012128684.1">
    <property type="nucleotide sequence ID" value="NC_022269.1"/>
</dbReference>
<dbReference type="SMR" id="A7MY11"/>
<dbReference type="KEGG" id="vha:VIBHAR_03217"/>
<dbReference type="PATRIC" id="fig|338187.25.peg.2973"/>
<dbReference type="Proteomes" id="UP000008152">
    <property type="component" value="Chromosome I"/>
</dbReference>
<dbReference type="GO" id="GO:0005737">
    <property type="term" value="C:cytoplasm"/>
    <property type="evidence" value="ECO:0007669"/>
    <property type="project" value="UniProtKB-SubCell"/>
</dbReference>
<dbReference type="GO" id="GO:0003824">
    <property type="term" value="F:catalytic activity"/>
    <property type="evidence" value="ECO:0007669"/>
    <property type="project" value="InterPro"/>
</dbReference>
<dbReference type="Gene3D" id="3.60.10.10">
    <property type="entry name" value="Endonuclease/exonuclease/phosphatase"/>
    <property type="match status" value="1"/>
</dbReference>
<dbReference type="HAMAP" id="MF_01119">
    <property type="entry name" value="UPF0294"/>
    <property type="match status" value="1"/>
</dbReference>
<dbReference type="InterPro" id="IPR036691">
    <property type="entry name" value="Endo/exonu/phosph_ase_sf"/>
</dbReference>
<dbReference type="InterPro" id="IPR005135">
    <property type="entry name" value="Endo/exonuclease/phosphatase"/>
</dbReference>
<dbReference type="InterPro" id="IPR022958">
    <property type="entry name" value="UPF0294"/>
</dbReference>
<dbReference type="NCBIfam" id="NF003840">
    <property type="entry name" value="PRK05421.1-2"/>
    <property type="match status" value="1"/>
</dbReference>
<dbReference type="NCBIfam" id="NF003841">
    <property type="entry name" value="PRK05421.1-3"/>
    <property type="match status" value="1"/>
</dbReference>
<dbReference type="NCBIfam" id="NF003842">
    <property type="entry name" value="PRK05421.1-4"/>
    <property type="match status" value="1"/>
</dbReference>
<dbReference type="Pfam" id="PF03372">
    <property type="entry name" value="Exo_endo_phos"/>
    <property type="match status" value="1"/>
</dbReference>
<dbReference type="SUPFAM" id="SSF56219">
    <property type="entry name" value="DNase I-like"/>
    <property type="match status" value="1"/>
</dbReference>
<comment type="subcellular location">
    <subcellularLocation>
        <location evidence="1">Cytoplasm</location>
    </subcellularLocation>
</comment>
<comment type="similarity">
    <text evidence="1">Belongs to the UPF0294 family.</text>
</comment>
<gene>
    <name type="ordered locus">VIBHAR_03217</name>
</gene>
<keyword id="KW-0963">Cytoplasm</keyword>
<name>Y3217_VIBC1</name>
<evidence type="ECO:0000255" key="1">
    <source>
        <dbReference type="HAMAP-Rule" id="MF_01119"/>
    </source>
</evidence>
<sequence length="282" mass="31830">MYQRLAFALVFLIIAGFVSFQVIFTVPEQPQIITQTGTNITQDIRCMEFKQPQVLDKDGELNVLVWNIYKQNRDNWQQALDAFSANKQLLLLQEASLTDEFKNWLVDGHWVSNQVSAFKALGSGAGVISIAQKEPIRACAYTSKEPWLRLPKSALYSKYQLSNGETLAVVNIHAINFTVGTEEYTSQLSVLEKVLKEHKGPILFAGDFNSWSEERLTAMKKALQKANLQEVTFSQDNRTQFITGLPLDHVFYRGLTLKNAKAPQSDASDHNPLLVSFTLNDQ</sequence>